<keyword id="KW-0903">Direct protein sequencing</keyword>
<keyword id="KW-0349">Heme</keyword>
<keyword id="KW-0376">Hydrogen peroxide</keyword>
<keyword id="KW-0408">Iron</keyword>
<keyword id="KW-0479">Metal-binding</keyword>
<keyword id="KW-0560">Oxidoreductase</keyword>
<keyword id="KW-0575">Peroxidase</keyword>
<name>CAT1_COMTR</name>
<accession>P83657</accession>
<feature type="chain" id="PRO_0000084984" description="Catalase-1">
    <location>
        <begin position="1"/>
        <end position="57" status="greater than"/>
    </location>
</feature>
<feature type="binding site" description="axial binding residue" evidence="1">
    <location>
        <position position="37"/>
    </location>
    <ligand>
        <name>heme</name>
        <dbReference type="ChEBI" id="CHEBI:30413"/>
    </ligand>
    <ligandPart>
        <name>Fe</name>
        <dbReference type="ChEBI" id="CHEBI:18248"/>
    </ligandPart>
</feature>
<feature type="non-consecutive residues" evidence="5">
    <location>
        <begin position="13"/>
        <end position="14"/>
    </location>
</feature>
<feature type="non-consecutive residues" evidence="5">
    <location>
        <begin position="32"/>
        <end position="33"/>
    </location>
</feature>
<feature type="non-consecutive residues" evidence="5">
    <location>
        <begin position="42"/>
        <end position="43"/>
    </location>
</feature>
<feature type="non-terminal residue" evidence="5">
    <location>
        <position position="57"/>
    </location>
</feature>
<proteinExistence type="evidence at protein level"/>
<protein>
    <recommendedName>
        <fullName>Catalase-1</fullName>
        <ecNumber>1.11.1.6</ecNumber>
    </recommendedName>
</protein>
<comment type="function">
    <text evidence="6">Decomposes hydrogen peroxide into water and oxygen; serves to protect cells from the toxic effects of hydrogen peroxide.</text>
</comment>
<comment type="catalytic activity">
    <reaction evidence="2 3 4">
        <text>2 H2O2 = O2 + 2 H2O</text>
        <dbReference type="Rhea" id="RHEA:20309"/>
        <dbReference type="ChEBI" id="CHEBI:15377"/>
        <dbReference type="ChEBI" id="CHEBI:15379"/>
        <dbReference type="ChEBI" id="CHEBI:16240"/>
        <dbReference type="EC" id="1.11.1.6"/>
    </reaction>
</comment>
<comment type="cofactor">
    <cofactor evidence="3">
        <name>heme</name>
        <dbReference type="ChEBI" id="CHEBI:30413"/>
    </cofactor>
</comment>
<comment type="biophysicochemical properties">
    <phDependence>
        <text>Active from pH 6.0 to 10.0.</text>
    </phDependence>
    <temperatureDependence>
        <text>Activity decreases at temperatures above 55 degrees Celsius.</text>
    </temperatureDependence>
</comment>
<comment type="subunit">
    <text evidence="3">Homodimer.</text>
</comment>
<comment type="induction">
    <text evidence="3">Constitutively expressed. Inducible by oxidative stress in the exponential phase of bacterial growth.</text>
</comment>
<comment type="mass spectrometry"/>
<comment type="similarity">
    <text evidence="6">Belongs to the catalase family.</text>
</comment>
<organism>
    <name type="scientific">Comamonas terrigena</name>
    <dbReference type="NCBI Taxonomy" id="32013"/>
    <lineage>
        <taxon>Bacteria</taxon>
        <taxon>Pseudomonadati</taxon>
        <taxon>Pseudomonadota</taxon>
        <taxon>Betaproteobacteria</taxon>
        <taxon>Burkholderiales</taxon>
        <taxon>Comamonadaceae</taxon>
        <taxon>Comamonas</taxon>
    </lineage>
</organism>
<evidence type="ECO:0000250" key="1">
    <source>
        <dbReference type="UniProtKB" id="P42321"/>
    </source>
</evidence>
<evidence type="ECO:0000255" key="2">
    <source>
        <dbReference type="PROSITE-ProRule" id="PRU10013"/>
    </source>
</evidence>
<evidence type="ECO:0000269" key="3">
    <source>
    </source>
</evidence>
<evidence type="ECO:0000269" key="4">
    <source>
    </source>
</evidence>
<evidence type="ECO:0000303" key="5">
    <source>
    </source>
</evidence>
<evidence type="ECO:0000305" key="6"/>
<reference evidence="6" key="1">
    <citation type="journal article" date="2004" name="Protein Expr. Purif.">
        <title>Expression, purification, and sequence analysis of catalase-1 from the soil bacterium Comamonas terrigena N3H.</title>
        <authorList>
            <person name="Zamocky M."/>
            <person name="Godocikova J."/>
            <person name="Gasperik J."/>
            <person name="Koller F."/>
            <person name="Polek B."/>
        </authorList>
    </citation>
    <scope>PROTEIN SEQUENCE</scope>
    <scope>CATALYTIC ACTIVITY</scope>
    <scope>MASS SPECTROMETRY</scope>
    <source>
        <strain evidence="4">N3H</strain>
    </source>
</reference>
<reference evidence="6" key="2">
    <citation type="journal article" date="2002" name="Folia Microbiol. (Praha)">
        <title>Oxidative stress-induced expression of catalases in Comamonas terrigena.</title>
        <authorList>
            <person name="Zamocky M."/>
            <person name="Polek B."/>
            <person name="Godocikova J."/>
            <person name="Koller F."/>
        </authorList>
    </citation>
    <scope>CATALYTIC ACTIVITY</scope>
    <scope>COFACTOR</scope>
    <scope>SUBUNIT</scope>
    <scope>INDUCTION</scope>
    <source>
        <strain evidence="3">N3H</strain>
    </source>
</reference>
<dbReference type="EC" id="1.11.1.6"/>
<dbReference type="SMR" id="P83657"/>
<dbReference type="PeroxiBase" id="4280">
    <property type="entry name" value="CterKat01"/>
</dbReference>
<dbReference type="GO" id="GO:0004096">
    <property type="term" value="F:catalase activity"/>
    <property type="evidence" value="ECO:0007669"/>
    <property type="project" value="UniProtKB-EC"/>
</dbReference>
<dbReference type="GO" id="GO:0020037">
    <property type="term" value="F:heme binding"/>
    <property type="evidence" value="ECO:0007669"/>
    <property type="project" value="InterPro"/>
</dbReference>
<dbReference type="GO" id="GO:0046872">
    <property type="term" value="F:metal ion binding"/>
    <property type="evidence" value="ECO:0007669"/>
    <property type="project" value="UniProtKB-KW"/>
</dbReference>
<dbReference type="GO" id="GO:0042744">
    <property type="term" value="P:hydrogen peroxide catabolic process"/>
    <property type="evidence" value="ECO:0007669"/>
    <property type="project" value="UniProtKB-KW"/>
</dbReference>
<dbReference type="GO" id="GO:0042542">
    <property type="term" value="P:response to hydrogen peroxide"/>
    <property type="evidence" value="ECO:0000314"/>
    <property type="project" value="UniProtKB"/>
</dbReference>
<dbReference type="Gene3D" id="2.40.180.10">
    <property type="entry name" value="Catalase core domain"/>
    <property type="match status" value="1"/>
</dbReference>
<dbReference type="InterPro" id="IPR020835">
    <property type="entry name" value="Catalase_sf"/>
</dbReference>
<dbReference type="SUPFAM" id="SSF56634">
    <property type="entry name" value="Heme-dependent catalase-like"/>
    <property type="match status" value="2"/>
</dbReference>
<sequence>THCLTTAAGAPVARFSTVAGERGAADAERDIRRLFSYGDAARRLGVNHQHIPVNAPR</sequence>